<evidence type="ECO:0000250" key="1"/>
<evidence type="ECO:0000250" key="2">
    <source>
        <dbReference type="UniProtKB" id="Q5TCQ9"/>
    </source>
</evidence>
<evidence type="ECO:0000250" key="3">
    <source>
        <dbReference type="UniProtKB" id="Q9JK71"/>
    </source>
</evidence>
<evidence type="ECO:0000255" key="4">
    <source>
        <dbReference type="PROSITE-ProRule" id="PRU00100"/>
    </source>
</evidence>
<evidence type="ECO:0000255" key="5">
    <source>
        <dbReference type="PROSITE-ProRule" id="PRU00143"/>
    </source>
</evidence>
<evidence type="ECO:0000255" key="6">
    <source>
        <dbReference type="PROSITE-ProRule" id="PRU00224"/>
    </source>
</evidence>
<evidence type="ECO:0000256" key="7">
    <source>
        <dbReference type="SAM" id="MobiDB-lite"/>
    </source>
</evidence>
<evidence type="ECO:0000269" key="8">
    <source>
    </source>
</evidence>
<evidence type="ECO:0000269" key="9">
    <source>
    </source>
</evidence>
<evidence type="ECO:0000269" key="10">
    <source>
    </source>
</evidence>
<evidence type="ECO:0000269" key="11">
    <source>
    </source>
</evidence>
<evidence type="ECO:0000303" key="12">
    <source>
    </source>
</evidence>
<evidence type="ECO:0000303" key="13">
    <source>
    </source>
</evidence>
<evidence type="ECO:0000305" key="14"/>
<evidence type="ECO:0007744" key="15">
    <source>
    </source>
</evidence>
<evidence type="ECO:0007744" key="16">
    <source>
    </source>
</evidence>
<dbReference type="EMBL" id="AF213258">
    <property type="protein sequence ID" value="AAG43836.1"/>
    <property type="molecule type" value="mRNA"/>
</dbReference>
<dbReference type="EMBL" id="AC162922">
    <property type="status" value="NOT_ANNOTATED_CDS"/>
    <property type="molecule type" value="Genomic_DNA"/>
</dbReference>
<dbReference type="EMBL" id="CU210868">
    <property type="status" value="NOT_ANNOTATED_CDS"/>
    <property type="molecule type" value="Genomic_DNA"/>
</dbReference>
<dbReference type="EMBL" id="AK030083">
    <property type="protein sequence ID" value="BAC26773.1"/>
    <property type="molecule type" value="mRNA"/>
</dbReference>
<dbReference type="EMBL" id="AK173225">
    <property type="protein sequence ID" value="BAD32503.1"/>
    <property type="status" value="ALT_SEQ"/>
    <property type="molecule type" value="Transcribed_RNA"/>
</dbReference>
<dbReference type="CCDS" id="CCDS17699.1">
    <molecule id="Q9EQJ9-2"/>
</dbReference>
<dbReference type="CCDS" id="CCDS51031.1">
    <molecule id="Q9EQJ9-1"/>
</dbReference>
<dbReference type="RefSeq" id="NP_598614.1">
    <molecule id="Q9EQJ9-2"/>
    <property type="nucleotide sequence ID" value="NM_133853.3"/>
</dbReference>
<dbReference type="SMR" id="Q9EQJ9"/>
<dbReference type="BioGRID" id="221259">
    <property type="interactions" value="3"/>
</dbReference>
<dbReference type="FunCoup" id="Q9EQJ9">
    <property type="interactions" value="2483"/>
</dbReference>
<dbReference type="IntAct" id="Q9EQJ9">
    <property type="interactions" value="8"/>
</dbReference>
<dbReference type="MINT" id="Q9EQJ9"/>
<dbReference type="STRING" id="10090.ENSMUSP00000112934"/>
<dbReference type="GlyGen" id="Q9EQJ9">
    <property type="glycosylation" value="2 sites, 1 N-linked glycan (1 site), 1 O-linked glycan (1 site)"/>
</dbReference>
<dbReference type="iPTMnet" id="Q9EQJ9"/>
<dbReference type="PhosphoSitePlus" id="Q9EQJ9"/>
<dbReference type="jPOST" id="Q9EQJ9"/>
<dbReference type="PaxDb" id="10090-ENSMUSP00000112934"/>
<dbReference type="PeptideAtlas" id="Q9EQJ9"/>
<dbReference type="ProteomicsDB" id="292081">
    <molecule id="Q9EQJ9-1"/>
</dbReference>
<dbReference type="ProteomicsDB" id="292082">
    <molecule id="Q9EQJ9-2"/>
</dbReference>
<dbReference type="Pumba" id="Q9EQJ9"/>
<dbReference type="Antibodypedia" id="1896">
    <property type="antibodies" value="73 antibodies from 21 providers"/>
</dbReference>
<dbReference type="DNASU" id="99470"/>
<dbReference type="Ensembl" id="ENSMUST00000064371.14">
    <molecule id="Q9EQJ9-2"/>
    <property type="protein sequence ID" value="ENSMUSP00000067932.8"/>
    <property type="gene ID" value="ENSMUSG00000052539.16"/>
</dbReference>
<dbReference type="Ensembl" id="ENSMUST00000122303.2">
    <molecule id="Q9EQJ9-2"/>
    <property type="protein sequence ID" value="ENSMUSP00000113713.2"/>
    <property type="gene ID" value="ENSMUSG00000052539.16"/>
</dbReference>
<dbReference type="GeneID" id="99470"/>
<dbReference type="KEGG" id="mmu:99470"/>
<dbReference type="UCSC" id="uc008qua.2">
    <molecule id="Q9EQJ9-2"/>
    <property type="organism name" value="mouse"/>
</dbReference>
<dbReference type="AGR" id="MGI:1923484"/>
<dbReference type="CTD" id="260425"/>
<dbReference type="MGI" id="MGI:1923484">
    <property type="gene designation" value="Magi3"/>
</dbReference>
<dbReference type="VEuPathDB" id="HostDB:ENSMUSG00000052539"/>
<dbReference type="eggNOG" id="KOG0707">
    <property type="taxonomic scope" value="Eukaryota"/>
</dbReference>
<dbReference type="eggNOG" id="KOG3209">
    <property type="taxonomic scope" value="Eukaryota"/>
</dbReference>
<dbReference type="GeneTree" id="ENSGT00940000156496"/>
<dbReference type="HOGENOM" id="CLU_004562_1_0_1"/>
<dbReference type="InParanoid" id="Q9EQJ9"/>
<dbReference type="OMA" id="PEAKYQG"/>
<dbReference type="OrthoDB" id="66881at2759"/>
<dbReference type="PhylomeDB" id="Q9EQJ9"/>
<dbReference type="BioGRID-ORCS" id="99470">
    <property type="hits" value="4 hits in 78 CRISPR screens"/>
</dbReference>
<dbReference type="CD-CODE" id="CE726F99">
    <property type="entry name" value="Postsynaptic density"/>
</dbReference>
<dbReference type="ChiTaRS" id="Magi3">
    <property type="organism name" value="mouse"/>
</dbReference>
<dbReference type="PRO" id="PR:Q9EQJ9"/>
<dbReference type="Proteomes" id="UP000000589">
    <property type="component" value="Chromosome 3"/>
</dbReference>
<dbReference type="RNAct" id="Q9EQJ9">
    <property type="molecule type" value="protein"/>
</dbReference>
<dbReference type="Bgee" id="ENSMUSG00000052539">
    <property type="expression patterns" value="Expressed in atrioventricular valve and 237 other cell types or tissues"/>
</dbReference>
<dbReference type="ExpressionAtlas" id="Q9EQJ9">
    <property type="expression patterns" value="baseline and differential"/>
</dbReference>
<dbReference type="GO" id="GO:0005923">
    <property type="term" value="C:bicellular tight junction"/>
    <property type="evidence" value="ECO:0007669"/>
    <property type="project" value="UniProtKB-SubCell"/>
</dbReference>
<dbReference type="GO" id="GO:0005911">
    <property type="term" value="C:cell-cell junction"/>
    <property type="evidence" value="ECO:0000314"/>
    <property type="project" value="MGI"/>
</dbReference>
<dbReference type="GO" id="GO:0005634">
    <property type="term" value="C:nucleus"/>
    <property type="evidence" value="ECO:0007669"/>
    <property type="project" value="UniProtKB-SubCell"/>
</dbReference>
<dbReference type="GO" id="GO:0005886">
    <property type="term" value="C:plasma membrane"/>
    <property type="evidence" value="ECO:0007669"/>
    <property type="project" value="UniProtKB-SubCell"/>
</dbReference>
<dbReference type="GO" id="GO:0005524">
    <property type="term" value="F:ATP binding"/>
    <property type="evidence" value="ECO:0007669"/>
    <property type="project" value="UniProtKB-KW"/>
</dbReference>
<dbReference type="GO" id="GO:0005109">
    <property type="term" value="F:frizzled binding"/>
    <property type="evidence" value="ECO:0000353"/>
    <property type="project" value="MGI"/>
</dbReference>
<dbReference type="CDD" id="cd06730">
    <property type="entry name" value="PDZ0_MAGI-1_3-like"/>
    <property type="match status" value="1"/>
</dbReference>
<dbReference type="CDD" id="cd06731">
    <property type="entry name" value="PDZ1_MAGI-1_3-like"/>
    <property type="match status" value="1"/>
</dbReference>
<dbReference type="CDD" id="cd06732">
    <property type="entry name" value="PDZ2_MAGI-1_3-like"/>
    <property type="match status" value="1"/>
</dbReference>
<dbReference type="CDD" id="cd06733">
    <property type="entry name" value="PDZ3_MAGI-1_3-like"/>
    <property type="match status" value="1"/>
</dbReference>
<dbReference type="CDD" id="cd06734">
    <property type="entry name" value="PDZ4_MAGI-1_3-like"/>
    <property type="match status" value="1"/>
</dbReference>
<dbReference type="CDD" id="cd06735">
    <property type="entry name" value="PDZ5_MAGI-1_3-like"/>
    <property type="match status" value="1"/>
</dbReference>
<dbReference type="CDD" id="cd00201">
    <property type="entry name" value="WW"/>
    <property type="match status" value="2"/>
</dbReference>
<dbReference type="FunFam" id="2.30.42.10:FF:000005">
    <property type="entry name" value="Membrane associated guanylate kinase, WW and PDZ domain containing 1"/>
    <property type="match status" value="1"/>
</dbReference>
<dbReference type="FunFam" id="2.30.42.10:FF:000006">
    <property type="entry name" value="Membrane associated guanylate kinase, WW and PDZ domain containing 1"/>
    <property type="match status" value="1"/>
</dbReference>
<dbReference type="FunFam" id="2.30.42.10:FF:000012">
    <property type="entry name" value="Membrane associated guanylate kinase, WW and PDZ domain containing 1"/>
    <property type="match status" value="1"/>
</dbReference>
<dbReference type="FunFam" id="2.20.70.10:FF:000001">
    <property type="entry name" value="Membrane-associated guanylate kinase, WW and PDZ domain-containing protein 1"/>
    <property type="match status" value="1"/>
</dbReference>
<dbReference type="FunFam" id="2.20.70.10:FF:000002">
    <property type="entry name" value="Membrane-associated guanylate kinase, WW and PDZ domain-containing protein 3 isoform 1"/>
    <property type="match status" value="1"/>
</dbReference>
<dbReference type="FunFam" id="2.30.42.10:FF:000042">
    <property type="entry name" value="Membrane-associated guanylate kinase, WW and PDZ domain-containing protein 3 isoform 1"/>
    <property type="match status" value="1"/>
</dbReference>
<dbReference type="FunFam" id="3.30.63.10:FF:000003">
    <property type="entry name" value="Membrane-associated guanylate kinase, WW and PDZ domain-containing protein 3 isoform 1"/>
    <property type="match status" value="1"/>
</dbReference>
<dbReference type="FunFam" id="2.30.42.10:FF:000131">
    <property type="entry name" value="membrane-associated guanylate kinase, WW and PDZ domain-containing protein 3 isoform X1"/>
    <property type="match status" value="1"/>
</dbReference>
<dbReference type="FunFam" id="2.30.42.10:FF:000148">
    <property type="entry name" value="membrane-associated guanylate kinase, WW and PDZ domain-containing protein 3 isoform X1"/>
    <property type="match status" value="1"/>
</dbReference>
<dbReference type="Gene3D" id="2.20.70.10">
    <property type="match status" value="2"/>
</dbReference>
<dbReference type="Gene3D" id="2.30.42.10">
    <property type="match status" value="6"/>
</dbReference>
<dbReference type="Gene3D" id="3.30.63.10">
    <property type="entry name" value="Guanylate Kinase phosphate binding domain"/>
    <property type="match status" value="1"/>
</dbReference>
<dbReference type="InterPro" id="IPR008145">
    <property type="entry name" value="GK/Ca_channel_bsu"/>
</dbReference>
<dbReference type="InterPro" id="IPR008144">
    <property type="entry name" value="Guanylate_kin-like_dom"/>
</dbReference>
<dbReference type="InterPro" id="IPR020590">
    <property type="entry name" value="Guanylate_kinase_CS"/>
</dbReference>
<dbReference type="InterPro" id="IPR027417">
    <property type="entry name" value="P-loop_NTPase"/>
</dbReference>
<dbReference type="InterPro" id="IPR001478">
    <property type="entry name" value="PDZ"/>
</dbReference>
<dbReference type="InterPro" id="IPR036034">
    <property type="entry name" value="PDZ_sf"/>
</dbReference>
<dbReference type="InterPro" id="IPR001202">
    <property type="entry name" value="WW_dom"/>
</dbReference>
<dbReference type="InterPro" id="IPR036020">
    <property type="entry name" value="WW_dom_sf"/>
</dbReference>
<dbReference type="PANTHER" id="PTHR10316">
    <property type="entry name" value="MEMBRANE ASSOCIATED GUANYLATE KINASE-RELATED"/>
    <property type="match status" value="1"/>
</dbReference>
<dbReference type="PANTHER" id="PTHR10316:SF10">
    <property type="entry name" value="MEMBRANE-ASSOCIATED GUANYLATE KINASE, WW AND PDZ DOMAIN-CONTAINING PROTEIN 3"/>
    <property type="match status" value="1"/>
</dbReference>
<dbReference type="Pfam" id="PF00625">
    <property type="entry name" value="Guanylate_kin"/>
    <property type="match status" value="1"/>
</dbReference>
<dbReference type="Pfam" id="PF00595">
    <property type="entry name" value="PDZ"/>
    <property type="match status" value="4"/>
</dbReference>
<dbReference type="Pfam" id="PF00397">
    <property type="entry name" value="WW"/>
    <property type="match status" value="2"/>
</dbReference>
<dbReference type="SMART" id="SM00072">
    <property type="entry name" value="GuKc"/>
    <property type="match status" value="1"/>
</dbReference>
<dbReference type="SMART" id="SM00228">
    <property type="entry name" value="PDZ"/>
    <property type="match status" value="6"/>
</dbReference>
<dbReference type="SMART" id="SM00456">
    <property type="entry name" value="WW"/>
    <property type="match status" value="2"/>
</dbReference>
<dbReference type="SUPFAM" id="SSF52540">
    <property type="entry name" value="P-loop containing nucleoside triphosphate hydrolases"/>
    <property type="match status" value="1"/>
</dbReference>
<dbReference type="SUPFAM" id="SSF50156">
    <property type="entry name" value="PDZ domain-like"/>
    <property type="match status" value="6"/>
</dbReference>
<dbReference type="SUPFAM" id="SSF51045">
    <property type="entry name" value="WW domain"/>
    <property type="match status" value="2"/>
</dbReference>
<dbReference type="PROSITE" id="PS00856">
    <property type="entry name" value="GUANYLATE_KINASE_1"/>
    <property type="match status" value="1"/>
</dbReference>
<dbReference type="PROSITE" id="PS50052">
    <property type="entry name" value="GUANYLATE_KINASE_2"/>
    <property type="match status" value="1"/>
</dbReference>
<dbReference type="PROSITE" id="PS50106">
    <property type="entry name" value="PDZ"/>
    <property type="match status" value="6"/>
</dbReference>
<dbReference type="PROSITE" id="PS01159">
    <property type="entry name" value="WW_DOMAIN_1"/>
    <property type="match status" value="2"/>
</dbReference>
<dbReference type="PROSITE" id="PS50020">
    <property type="entry name" value="WW_DOMAIN_2"/>
    <property type="match status" value="2"/>
</dbReference>
<keyword id="KW-0025">Alternative splicing</keyword>
<keyword id="KW-0067">ATP-binding</keyword>
<keyword id="KW-0965">Cell junction</keyword>
<keyword id="KW-1003">Cell membrane</keyword>
<keyword id="KW-0472">Membrane</keyword>
<keyword id="KW-0547">Nucleotide-binding</keyword>
<keyword id="KW-0539">Nucleus</keyword>
<keyword id="KW-0597">Phosphoprotein</keyword>
<keyword id="KW-1185">Reference proteome</keyword>
<keyword id="KW-0677">Repeat</keyword>
<keyword id="KW-0796">Tight junction</keyword>
<protein>
    <recommendedName>
        <fullName>Membrane-associated guanylate kinase, WW and PDZ domain-containing protein 3</fullName>
    </recommendedName>
    <alternativeName>
        <fullName>Membrane-associated guanylate kinase inverted 3</fullName>
        <shortName>MAGI-3</shortName>
    </alternativeName>
</protein>
<sequence length="1476" mass="161672">MSKTLKKKKHWLSKVQECAVSWAGPPGDLGAEIRGGAERGEFPYLGRLRDEAGGGGGTCCVVSGKAPSPGDVLLEVNGTPVSGLTNRDTLAVIRHFREPIRLKTVKPGKVINKDLRHYLSLQFQKGSIDHKLQQVIRDNLYLRTIPCTTRAPRDGEVPGVDYNFISVEQFKALEESGALLESGTYDGNFYGTPKPPAEPSPFQPDPVDQVLFDNEFDTESQRKRTTSVSKMERMDSSLPEEEEDEDKEAVNGSGSMETREMHSETSDCWMKTVPSYNQTNSSMDFRNYMMRDENLEPLPKNWEMAYTDTGMIYFIDHNTKTTTWLDPRLCKKAKAPEDCEDGELPYGWEKIEDPQYGTYYVDHLNQKTQFENPVEEAKRKKQLGQAEIHSAKTDVERAHFTRDPSQLKGVLVRASLKKSTMGFGFTIIGGDRPDEFLQVKNVLKDGPAAQDGKIAPGDVIVDINGNCVLGHTHADVVQMFQLVPVNQYVNLTLCRGYPLPDDSEDPVVDIVAATPVINGQSLTKGETCMNTQDFKLGAMVLDQNGKSGQILASDRLNGPSESSEQRASLASSGSSQPELVTIPLIKGPKGFGFAIADSPTGQKVKMILDSQWCQGLQKGDIIKEIYHQNVQNLTHLQVVEVLKQFPVGADVPLLILRGGPCSPTKTAKTKTDTKENSGSLETINEPIPQPMPFPPSIIRSGSPKLDPSEVYLKSKTLYEDKPPNTKDLDVFLRKQESGFGFRVLGGDGPDQSIYIGAIIPLGAAEKDGRLRAADELMCIDGIPVKGKSHKQVLDLMTTAARNGHVLLTVRRKIFYGEKQPEDESHQAFSQNGSPRLNRAELPTRSAPQEAYDVTLQRKENEGFGFVILTSKSKPPPGVIPHKIGRVIDGSPADRCGGLKVGDHISAVNGQSIVDLSHDNIVQLIKDAGVTVTLTVVAEEEHHGPPSGTNSARQSPALQHRPMGQAQANHIPGDRIALEGEIGRDVCSSYRHSWSDHKHLAQPDTAVISVVGSRHNQSLGCYPVELERGPRGFGFSLRGGKEYNMGLFILRLAEDGPAIKDGRIHVGDQIVEINGEPTQGITHTRAIELIQAGGNKVLLLLRPGTGLIPDHGDWDTNSPSSSNVIYDEQPPPLPSSHSASTFEESHVPATEDSLTRVQICEKAEELKDTVQEKKSTLNGSQPEMKYQSVHKTMSKKDPPRGSGHGEKSRLKGENGVTRRGRSASPKKSVNRHSEEHLEKIPRPLKSDPKEKSRDRSLSPRKGESKGRLTIKAGSGQDPYRKDRGRSSSPKKQQKIGGNSLSNTEGKLSEAGSRRAAGHPRDSTEQLPDGREKSGVSRKDLKQSQPGKTRTKSPEKKSSKVDETSLPSKKTSSTAGRVVSEKEKGKKPTAGETSRETVEHTQISAKQLKQEAQEKTALGNADDHKGRESEVTDRCRERAGCTPQSSSLVKKAPITPGPWRVPRANKVTGTTGMADKQL</sequence>
<proteinExistence type="evidence at protein level"/>
<name>MAGI3_MOUSE</name>
<feature type="chain" id="PRO_0000341408" description="Membrane-associated guanylate kinase, WW and PDZ domain-containing protein 3">
    <location>
        <begin position="1"/>
        <end position="1476"/>
    </location>
</feature>
<feature type="domain" description="PDZ 1" evidence="5">
    <location>
        <begin position="18"/>
        <end position="108"/>
    </location>
</feature>
<feature type="domain" description="Guanylate kinase-like" evidence="4">
    <location>
        <begin position="116"/>
        <end position="290"/>
    </location>
</feature>
<feature type="domain" description="WW 1" evidence="6">
    <location>
        <begin position="296"/>
        <end position="329"/>
    </location>
</feature>
<feature type="domain" description="WW 2" evidence="6">
    <location>
        <begin position="342"/>
        <end position="375"/>
    </location>
</feature>
<feature type="domain" description="PDZ 2" evidence="5">
    <location>
        <begin position="413"/>
        <end position="495"/>
    </location>
</feature>
<feature type="domain" description="PDZ 3" evidence="5">
    <location>
        <begin position="581"/>
        <end position="657"/>
    </location>
</feature>
<feature type="domain" description="PDZ 4" evidence="5">
    <location>
        <begin position="729"/>
        <end position="811"/>
    </location>
</feature>
<feature type="domain" description="PDZ 5" evidence="5">
    <location>
        <begin position="852"/>
        <end position="939"/>
    </location>
</feature>
<feature type="domain" description="PDZ 6" evidence="5">
    <location>
        <begin position="1022"/>
        <end position="1104"/>
    </location>
</feature>
<feature type="region of interest" description="Interaction with ADRB1 and TGFA" evidence="11">
    <location>
        <begin position="18"/>
        <end position="108"/>
    </location>
</feature>
<feature type="region of interest" description="Disordered" evidence="7">
    <location>
        <begin position="184"/>
        <end position="266"/>
    </location>
</feature>
<feature type="region of interest" description="Interaction with PTEN" evidence="1">
    <location>
        <begin position="413"/>
        <end position="495"/>
    </location>
</feature>
<feature type="region of interest" description="Disordered" evidence="7">
    <location>
        <begin position="551"/>
        <end position="575"/>
    </location>
</feature>
<feature type="region of interest" description="Disordered" evidence="7">
    <location>
        <begin position="664"/>
        <end position="691"/>
    </location>
</feature>
<feature type="region of interest" description="Interaction with ADGRB1" evidence="1">
    <location>
        <begin position="729"/>
        <end position="811"/>
    </location>
</feature>
<feature type="region of interest" description="Disordered" evidence="7">
    <location>
        <begin position="818"/>
        <end position="844"/>
    </location>
</feature>
<feature type="region of interest" description="Interaction with LPAR2 and GRIN2B" evidence="1">
    <location>
        <begin position="852"/>
        <end position="939"/>
    </location>
</feature>
<feature type="region of interest" description="Disordered" evidence="7">
    <location>
        <begin position="939"/>
        <end position="966"/>
    </location>
</feature>
<feature type="region of interest" description="Disordered" evidence="7">
    <location>
        <begin position="1109"/>
        <end position="1151"/>
    </location>
</feature>
<feature type="region of interest" description="Disordered" evidence="7">
    <location>
        <begin position="1168"/>
        <end position="1476"/>
    </location>
</feature>
<feature type="compositionally biased region" description="Pro residues" evidence="7">
    <location>
        <begin position="193"/>
        <end position="204"/>
    </location>
</feature>
<feature type="compositionally biased region" description="Acidic residues" evidence="7">
    <location>
        <begin position="238"/>
        <end position="247"/>
    </location>
</feature>
<feature type="compositionally biased region" description="Polar residues" evidence="7">
    <location>
        <begin position="559"/>
        <end position="575"/>
    </location>
</feature>
<feature type="compositionally biased region" description="Polar residues" evidence="7">
    <location>
        <begin position="946"/>
        <end position="956"/>
    </location>
</feature>
<feature type="compositionally biased region" description="Polar residues" evidence="7">
    <location>
        <begin position="1114"/>
        <end position="1123"/>
    </location>
</feature>
<feature type="compositionally biased region" description="Basic and acidic residues" evidence="7">
    <location>
        <begin position="1193"/>
        <end position="1211"/>
    </location>
</feature>
<feature type="compositionally biased region" description="Basic and acidic residues" evidence="7">
    <location>
        <begin position="1230"/>
        <end position="1265"/>
    </location>
</feature>
<feature type="compositionally biased region" description="Polar residues" evidence="7">
    <location>
        <begin position="1285"/>
        <end position="1304"/>
    </location>
</feature>
<feature type="compositionally biased region" description="Basic and acidic residues" evidence="7">
    <location>
        <begin position="1317"/>
        <end position="1340"/>
    </location>
</feature>
<feature type="compositionally biased region" description="Basic and acidic residues" evidence="7">
    <location>
        <begin position="1350"/>
        <end position="1361"/>
    </location>
</feature>
<feature type="compositionally biased region" description="Polar residues" evidence="7">
    <location>
        <begin position="1363"/>
        <end position="1373"/>
    </location>
</feature>
<feature type="compositionally biased region" description="Basic and acidic residues" evidence="7">
    <location>
        <begin position="1419"/>
        <end position="1437"/>
    </location>
</feature>
<feature type="binding site" evidence="4">
    <location>
        <begin position="123"/>
        <end position="130"/>
    </location>
    <ligand>
        <name>ATP</name>
        <dbReference type="ChEBI" id="CHEBI:30616"/>
    </ligand>
</feature>
<feature type="modified residue" description="Phosphoserine" evidence="15">
    <location>
        <position position="236"/>
    </location>
</feature>
<feature type="modified residue" description="Phosphoserine" evidence="2">
    <location>
        <position position="598"/>
    </location>
</feature>
<feature type="modified residue" description="Phosphoserine" evidence="3">
    <location>
        <position position="702"/>
    </location>
</feature>
<feature type="modified residue" description="Phosphoserine" evidence="2">
    <location>
        <position position="833"/>
    </location>
</feature>
<feature type="modified residue" description="Phosphoserine" evidence="16">
    <location>
        <position position="916"/>
    </location>
</feature>
<feature type="modified residue" description="Phosphoserine" evidence="3">
    <location>
        <position position="1321"/>
    </location>
</feature>
<feature type="splice variant" id="VSP_034288" description="In isoform 2." evidence="12 13">
    <original>DWDTNSPSSSNVIYD</original>
    <variation>LAPSGLCSYVKPEQH</variation>
    <location>
        <begin position="1112"/>
        <end position="1126"/>
    </location>
</feature>
<feature type="splice variant" id="VSP_034289" description="In isoform 2." evidence="12 13">
    <location>
        <begin position="1127"/>
        <end position="1476"/>
    </location>
</feature>
<feature type="sequence conflict" description="In Ref. 3; BAC26773." evidence="14" ref="3">
    <original>I</original>
    <variation>N</variation>
    <location>
        <position position="625"/>
    </location>
</feature>
<gene>
    <name type="primary">Magi3</name>
    <name type="synonym">Kiaa1634</name>
</gene>
<reference key="1">
    <citation type="journal article" date="2005" name="Exp. Cell Res.">
        <title>Identification of MAGI-3 as a transforming growth factor-alpha tail binding protein.</title>
        <authorList>
            <person name="Franklin J.L."/>
            <person name="Yoshiura K."/>
            <person name="Dempsey P.J."/>
            <person name="Bogatcheva G."/>
            <person name="Jeyakumar L."/>
            <person name="Meise K.S."/>
            <person name="Pearsall R.S."/>
            <person name="Threadgill D."/>
            <person name="Coffey R.J."/>
        </authorList>
    </citation>
    <scope>NUCLEOTIDE SEQUENCE [MRNA] (ISOFORM 2)</scope>
    <scope>FUNCTION</scope>
    <scope>TISSUE SPECIFICITY</scope>
    <scope>INTERACTION WITH TGFA</scope>
</reference>
<reference key="2">
    <citation type="journal article" date="2009" name="PLoS Biol.">
        <title>Lineage-specific biology revealed by a finished genome assembly of the mouse.</title>
        <authorList>
            <person name="Church D.M."/>
            <person name="Goodstadt L."/>
            <person name="Hillier L.W."/>
            <person name="Zody M.C."/>
            <person name="Goldstein S."/>
            <person name="She X."/>
            <person name="Bult C.J."/>
            <person name="Agarwala R."/>
            <person name="Cherry J.L."/>
            <person name="DiCuccio M."/>
            <person name="Hlavina W."/>
            <person name="Kapustin Y."/>
            <person name="Meric P."/>
            <person name="Maglott D."/>
            <person name="Birtle Z."/>
            <person name="Marques A.C."/>
            <person name="Graves T."/>
            <person name="Zhou S."/>
            <person name="Teague B."/>
            <person name="Potamousis K."/>
            <person name="Churas C."/>
            <person name="Place M."/>
            <person name="Herschleb J."/>
            <person name="Runnheim R."/>
            <person name="Forrest D."/>
            <person name="Amos-Landgraf J."/>
            <person name="Schwartz D.C."/>
            <person name="Cheng Z."/>
            <person name="Lindblad-Toh K."/>
            <person name="Eichler E.E."/>
            <person name="Ponting C.P."/>
        </authorList>
    </citation>
    <scope>NUCLEOTIDE SEQUENCE [LARGE SCALE GENOMIC DNA]</scope>
    <source>
        <strain>C57BL/6J</strain>
    </source>
</reference>
<reference key="3">
    <citation type="journal article" date="2005" name="Science">
        <title>The transcriptional landscape of the mammalian genome.</title>
        <authorList>
            <person name="Carninci P."/>
            <person name="Kasukawa T."/>
            <person name="Katayama S."/>
            <person name="Gough J."/>
            <person name="Frith M.C."/>
            <person name="Maeda N."/>
            <person name="Oyama R."/>
            <person name="Ravasi T."/>
            <person name="Lenhard B."/>
            <person name="Wells C."/>
            <person name="Kodzius R."/>
            <person name="Shimokawa K."/>
            <person name="Bajic V.B."/>
            <person name="Brenner S.E."/>
            <person name="Batalov S."/>
            <person name="Forrest A.R."/>
            <person name="Zavolan M."/>
            <person name="Davis M.J."/>
            <person name="Wilming L.G."/>
            <person name="Aidinis V."/>
            <person name="Allen J.E."/>
            <person name="Ambesi-Impiombato A."/>
            <person name="Apweiler R."/>
            <person name="Aturaliya R.N."/>
            <person name="Bailey T.L."/>
            <person name="Bansal M."/>
            <person name="Baxter L."/>
            <person name="Beisel K.W."/>
            <person name="Bersano T."/>
            <person name="Bono H."/>
            <person name="Chalk A.M."/>
            <person name="Chiu K.P."/>
            <person name="Choudhary V."/>
            <person name="Christoffels A."/>
            <person name="Clutterbuck D.R."/>
            <person name="Crowe M.L."/>
            <person name="Dalla E."/>
            <person name="Dalrymple B.P."/>
            <person name="de Bono B."/>
            <person name="Della Gatta G."/>
            <person name="di Bernardo D."/>
            <person name="Down T."/>
            <person name="Engstrom P."/>
            <person name="Fagiolini M."/>
            <person name="Faulkner G."/>
            <person name="Fletcher C.F."/>
            <person name="Fukushima T."/>
            <person name="Furuno M."/>
            <person name="Futaki S."/>
            <person name="Gariboldi M."/>
            <person name="Georgii-Hemming P."/>
            <person name="Gingeras T.R."/>
            <person name="Gojobori T."/>
            <person name="Green R.E."/>
            <person name="Gustincich S."/>
            <person name="Harbers M."/>
            <person name="Hayashi Y."/>
            <person name="Hensch T.K."/>
            <person name="Hirokawa N."/>
            <person name="Hill D."/>
            <person name="Huminiecki L."/>
            <person name="Iacono M."/>
            <person name="Ikeo K."/>
            <person name="Iwama A."/>
            <person name="Ishikawa T."/>
            <person name="Jakt M."/>
            <person name="Kanapin A."/>
            <person name="Katoh M."/>
            <person name="Kawasawa Y."/>
            <person name="Kelso J."/>
            <person name="Kitamura H."/>
            <person name="Kitano H."/>
            <person name="Kollias G."/>
            <person name="Krishnan S.P."/>
            <person name="Kruger A."/>
            <person name="Kummerfeld S.K."/>
            <person name="Kurochkin I.V."/>
            <person name="Lareau L.F."/>
            <person name="Lazarevic D."/>
            <person name="Lipovich L."/>
            <person name="Liu J."/>
            <person name="Liuni S."/>
            <person name="McWilliam S."/>
            <person name="Madan Babu M."/>
            <person name="Madera M."/>
            <person name="Marchionni L."/>
            <person name="Matsuda H."/>
            <person name="Matsuzawa S."/>
            <person name="Miki H."/>
            <person name="Mignone F."/>
            <person name="Miyake S."/>
            <person name="Morris K."/>
            <person name="Mottagui-Tabar S."/>
            <person name="Mulder N."/>
            <person name="Nakano N."/>
            <person name="Nakauchi H."/>
            <person name="Ng P."/>
            <person name="Nilsson R."/>
            <person name="Nishiguchi S."/>
            <person name="Nishikawa S."/>
            <person name="Nori F."/>
            <person name="Ohara O."/>
            <person name="Okazaki Y."/>
            <person name="Orlando V."/>
            <person name="Pang K.C."/>
            <person name="Pavan W.J."/>
            <person name="Pavesi G."/>
            <person name="Pesole G."/>
            <person name="Petrovsky N."/>
            <person name="Piazza S."/>
            <person name="Reed J."/>
            <person name="Reid J.F."/>
            <person name="Ring B.Z."/>
            <person name="Ringwald M."/>
            <person name="Rost B."/>
            <person name="Ruan Y."/>
            <person name="Salzberg S.L."/>
            <person name="Sandelin A."/>
            <person name="Schneider C."/>
            <person name="Schoenbach C."/>
            <person name="Sekiguchi K."/>
            <person name="Semple C.A."/>
            <person name="Seno S."/>
            <person name="Sessa L."/>
            <person name="Sheng Y."/>
            <person name="Shibata Y."/>
            <person name="Shimada H."/>
            <person name="Shimada K."/>
            <person name="Silva D."/>
            <person name="Sinclair B."/>
            <person name="Sperling S."/>
            <person name="Stupka E."/>
            <person name="Sugiura K."/>
            <person name="Sultana R."/>
            <person name="Takenaka Y."/>
            <person name="Taki K."/>
            <person name="Tammoja K."/>
            <person name="Tan S.L."/>
            <person name="Tang S."/>
            <person name="Taylor M.S."/>
            <person name="Tegner J."/>
            <person name="Teichmann S.A."/>
            <person name="Ueda H.R."/>
            <person name="van Nimwegen E."/>
            <person name="Verardo R."/>
            <person name="Wei C.L."/>
            <person name="Yagi K."/>
            <person name="Yamanishi H."/>
            <person name="Zabarovsky E."/>
            <person name="Zhu S."/>
            <person name="Zimmer A."/>
            <person name="Hide W."/>
            <person name="Bult C."/>
            <person name="Grimmond S.M."/>
            <person name="Teasdale R.D."/>
            <person name="Liu E.T."/>
            <person name="Brusic V."/>
            <person name="Quackenbush J."/>
            <person name="Wahlestedt C."/>
            <person name="Mattick J.S."/>
            <person name="Hume D.A."/>
            <person name="Kai C."/>
            <person name="Sasaki D."/>
            <person name="Tomaru Y."/>
            <person name="Fukuda S."/>
            <person name="Kanamori-Katayama M."/>
            <person name="Suzuki M."/>
            <person name="Aoki J."/>
            <person name="Arakawa T."/>
            <person name="Iida J."/>
            <person name="Imamura K."/>
            <person name="Itoh M."/>
            <person name="Kato T."/>
            <person name="Kawaji H."/>
            <person name="Kawagashira N."/>
            <person name="Kawashima T."/>
            <person name="Kojima M."/>
            <person name="Kondo S."/>
            <person name="Konno H."/>
            <person name="Nakano K."/>
            <person name="Ninomiya N."/>
            <person name="Nishio T."/>
            <person name="Okada M."/>
            <person name="Plessy C."/>
            <person name="Shibata K."/>
            <person name="Shiraki T."/>
            <person name="Suzuki S."/>
            <person name="Tagami M."/>
            <person name="Waki K."/>
            <person name="Watahiki A."/>
            <person name="Okamura-Oho Y."/>
            <person name="Suzuki H."/>
            <person name="Kawai J."/>
            <person name="Hayashizaki Y."/>
        </authorList>
    </citation>
    <scope>NUCLEOTIDE SEQUENCE [LARGE SCALE MRNA] OF 53-1355 (ISOFORM 2)</scope>
    <source>
        <strain>C57BL/6J</strain>
        <tissue>Testis</tissue>
    </source>
</reference>
<reference key="4">
    <citation type="journal article" date="2004" name="DNA Res.">
        <title>Prediction of the coding sequences of mouse homologues of KIAA gene: IV. The complete nucleotide sequences of 500 mouse KIAA-homologous cDNAs identified by screening of terminal sequences of cDNA clones randomly sampled from size-fractionated libraries.</title>
        <authorList>
            <person name="Okazaki N."/>
            <person name="Kikuno R."/>
            <person name="Ohara R."/>
            <person name="Inamoto S."/>
            <person name="Koseki H."/>
            <person name="Hiraoka S."/>
            <person name="Saga Y."/>
            <person name="Seino S."/>
            <person name="Nishimura M."/>
            <person name="Kaisho T."/>
            <person name="Hoshino K."/>
            <person name="Kitamura H."/>
            <person name="Nagase T."/>
            <person name="Ohara O."/>
            <person name="Koga H."/>
        </authorList>
    </citation>
    <scope>NUCLEOTIDE SEQUENCE [LARGE SCALE MRNA] OF 337-1476 (ISOFORM 1)</scope>
</reference>
<reference key="5">
    <citation type="journal article" date="2003" name="Mol. Cell. Biol.">
        <title>Requirement of PDZ-containing proteins for cell cycle regulation and differentiation in the mouse lens epithelium.</title>
        <authorList>
            <person name="Nguyen M.M."/>
            <person name="Nguyen M.L."/>
            <person name="Caruana G."/>
            <person name="Bernstein A."/>
            <person name="Lambert P.F."/>
            <person name="Griep A.E."/>
        </authorList>
    </citation>
    <scope>TISSUE SPECIFICITY</scope>
</reference>
<reference key="6">
    <citation type="journal article" date="2004" name="Development">
        <title>Delta proteins and MAGI proteins: an interaction of Notch ligands with intracellular scaffolding molecules and its significance for zebrafish development.</title>
        <authorList>
            <person name="Wright G.J."/>
            <person name="Leslie J.D."/>
            <person name="Ariza-McNaughton L."/>
            <person name="Lewis J."/>
        </authorList>
    </citation>
    <scope>INTERACTION WITH DLL1</scope>
</reference>
<reference key="7">
    <citation type="journal article" date="2004" name="Oncogene">
        <title>MAGI-3 is involved in the regulation of the JNK signaling pathway as a scaffold protein for frizzled and Ltap.</title>
        <authorList>
            <person name="Yao R."/>
            <person name="Natsume Y."/>
            <person name="Noda T."/>
        </authorList>
    </citation>
    <scope>FUNCTION</scope>
    <scope>SUBCELLULAR LOCATION</scope>
    <scope>INTERACTION WITH FZD4; FZD7 AND VANGL2</scope>
</reference>
<reference key="8">
    <citation type="journal article" date="2007" name="Proc. Natl. Acad. Sci. U.S.A.">
        <title>Large-scale phosphorylation analysis of mouse liver.</title>
        <authorList>
            <person name="Villen J."/>
            <person name="Beausoleil S.A."/>
            <person name="Gerber S.A."/>
            <person name="Gygi S.P."/>
        </authorList>
    </citation>
    <scope>PHOSPHORYLATION [LARGE SCALE ANALYSIS] AT SER-236</scope>
    <scope>IDENTIFICATION BY MASS SPECTROMETRY [LARGE SCALE ANALYSIS]</scope>
    <source>
        <tissue>Liver</tissue>
    </source>
</reference>
<reference key="9">
    <citation type="journal article" date="2010" name="Cell">
        <title>A tissue-specific atlas of mouse protein phosphorylation and expression.</title>
        <authorList>
            <person name="Huttlin E.L."/>
            <person name="Jedrychowski M.P."/>
            <person name="Elias J.E."/>
            <person name="Goswami T."/>
            <person name="Rad R."/>
            <person name="Beausoleil S.A."/>
            <person name="Villen J."/>
            <person name="Haas W."/>
            <person name="Sowa M.E."/>
            <person name="Gygi S.P."/>
        </authorList>
    </citation>
    <scope>PHOSPHORYLATION [LARGE SCALE ANALYSIS] AT SER-916</scope>
    <scope>IDENTIFICATION BY MASS SPECTROMETRY [LARGE SCALE ANALYSIS]</scope>
    <source>
        <tissue>Brain</tissue>
        <tissue>Brown adipose tissue</tissue>
        <tissue>Heart</tissue>
        <tissue>Kidney</tissue>
        <tissue>Liver</tissue>
        <tissue>Lung</tissue>
        <tissue>Spleen</tissue>
        <tissue>Testis</tissue>
    </source>
</reference>
<organism>
    <name type="scientific">Mus musculus</name>
    <name type="common">Mouse</name>
    <dbReference type="NCBI Taxonomy" id="10090"/>
    <lineage>
        <taxon>Eukaryota</taxon>
        <taxon>Metazoa</taxon>
        <taxon>Chordata</taxon>
        <taxon>Craniata</taxon>
        <taxon>Vertebrata</taxon>
        <taxon>Euteleostomi</taxon>
        <taxon>Mammalia</taxon>
        <taxon>Eutheria</taxon>
        <taxon>Euarchontoglires</taxon>
        <taxon>Glires</taxon>
        <taxon>Rodentia</taxon>
        <taxon>Myomorpha</taxon>
        <taxon>Muroidea</taxon>
        <taxon>Muridae</taxon>
        <taxon>Murinae</taxon>
        <taxon>Mus</taxon>
        <taxon>Mus</taxon>
    </lineage>
</organism>
<comment type="function">
    <text evidence="9 11">Acts as a scaffolding protein at cell-cell junctions, thereby regulating various cellular and signaling processes. Cooperates with PTEN to modulate the kinase activity of AKT1. Its interaction with PTPRB and tyrosine phosphorylated proteins suggests that it may link receptor tyrosine phosphatase with its substrates at the plasma membrane. In polarized epithelial cells, involved in efficient trafficking of TGFA to the cell surface. Regulates the ability of LPAR2 to activate ERK and RhoA pathways. Regulates the JNK signaling cascade via its interaction with FZD4 and VANGL2.</text>
</comment>
<comment type="subunit">
    <text evidence="2 3 9 10 11">Interacts with ADRB1, ADGRB1, LPAR2/EDG4, GRIN2B, PTEN, and PTPRB. Interacts with unidentified tyrosine phosphorylated proteins (By similarity). Interacts with FZD4, FZD7, TGFA and VANGL2. Interacts with DLL1 (PubMed:15509766). Interacts with PRRG4 (via cytoplasmic domain) (By similarity).</text>
</comment>
<comment type="interaction">
    <interactant intactId="EBI-7455245">
        <id>Q9EQJ9</id>
    </interactant>
    <interactant intactId="EBI-1034374">
        <id>P01135</id>
        <label>TGFA</label>
    </interactant>
    <organismsDiffer>true</organismsDiffer>
    <experiments>4</experiments>
</comment>
<comment type="subcellular location">
    <subcellularLocation>
        <location evidence="9">Cell membrane</location>
        <topology evidence="9">Peripheral membrane protein</topology>
    </subcellularLocation>
    <subcellularLocation>
        <location evidence="9">Cell junction</location>
        <location evidence="9">Tight junction</location>
    </subcellularLocation>
    <subcellularLocation>
        <location evidence="1">Nucleus</location>
    </subcellularLocation>
    <text evidence="1">Concentrates in specific sites at the plasma membrane and in the nucleus. In epithelial cells, it localizes at tight junctions (By similarity).</text>
</comment>
<comment type="alternative products">
    <event type="alternative splicing"/>
    <isoform>
        <id>Q9EQJ9-1</id>
        <name>1</name>
        <sequence type="displayed"/>
    </isoform>
    <isoform>
        <id>Q9EQJ9-2</id>
        <name>2</name>
        <sequence type="described" ref="VSP_034288 VSP_034289"/>
    </isoform>
</comment>
<comment type="tissue specificity">
    <text evidence="8 11">Widely expressed. Colocalizes with TGFA in neurons in the cortex and dentate gyrus, as well as in ependymal cells and some astrocytes (at protein level). Present in lens epithelium.</text>
</comment>
<comment type="similarity">
    <text evidence="14">Belongs to the MAGUK family.</text>
</comment>
<comment type="sequence caution" evidence="14">
    <conflict type="miscellaneous discrepancy">
        <sequence resource="EMBL-CDS" id="BAD32503"/>
    </conflict>
    <text>The sequence differs from that shown because it seems to be derived from a pre-mRNA.</text>
</comment>
<accession>Q9EQJ9</accession>
<accession>B0V3N7</accession>
<accession>B0V3N8</accession>
<accession>Q69ZE1</accession>
<accession>Q8C0P8</accession>